<reference key="1">
    <citation type="journal article" date="2002" name="Nat. Biotechnol.">
        <title>Genome sequence of the dissimilatory metal ion-reducing bacterium Shewanella oneidensis.</title>
        <authorList>
            <person name="Heidelberg J.F."/>
            <person name="Paulsen I.T."/>
            <person name="Nelson K.E."/>
            <person name="Gaidos E.J."/>
            <person name="Nelson W.C."/>
            <person name="Read T.D."/>
            <person name="Eisen J.A."/>
            <person name="Seshadri R."/>
            <person name="Ward N.L."/>
            <person name="Methe B.A."/>
            <person name="Clayton R.A."/>
            <person name="Meyer T."/>
            <person name="Tsapin A."/>
            <person name="Scott J."/>
            <person name="Beanan M.J."/>
            <person name="Brinkac L.M."/>
            <person name="Daugherty S.C."/>
            <person name="DeBoy R.T."/>
            <person name="Dodson R.J."/>
            <person name="Durkin A.S."/>
            <person name="Haft D.H."/>
            <person name="Kolonay J.F."/>
            <person name="Madupu R."/>
            <person name="Peterson J.D."/>
            <person name="Umayam L.A."/>
            <person name="White O."/>
            <person name="Wolf A.M."/>
            <person name="Vamathevan J.J."/>
            <person name="Weidman J.F."/>
            <person name="Impraim M."/>
            <person name="Lee K."/>
            <person name="Berry K.J."/>
            <person name="Lee C."/>
            <person name="Mueller J."/>
            <person name="Khouri H.M."/>
            <person name="Gill J."/>
            <person name="Utterback T.R."/>
            <person name="McDonald L.A."/>
            <person name="Feldblyum T.V."/>
            <person name="Smith H.O."/>
            <person name="Venter J.C."/>
            <person name="Nealson K.H."/>
            <person name="Fraser C.M."/>
        </authorList>
    </citation>
    <scope>NUCLEOTIDE SEQUENCE [LARGE SCALE GENOMIC DNA]</scope>
    <source>
        <strain>ATCC 700550 / JCM 31522 / CIP 106686 / LMG 19005 / NCIMB 14063 / MR-1</strain>
    </source>
</reference>
<accession>Q8ECR0</accession>
<evidence type="ECO:0000255" key="1">
    <source>
        <dbReference type="HAMAP-Rule" id="MF_01102"/>
    </source>
</evidence>
<name>MNMC_SHEON</name>
<dbReference type="EC" id="2.1.1.61" evidence="1"/>
<dbReference type="EC" id="1.5.-.-" evidence="1"/>
<dbReference type="EMBL" id="AE014299">
    <property type="protein sequence ID" value="AAN56081.2"/>
    <property type="molecule type" value="Genomic_DNA"/>
</dbReference>
<dbReference type="RefSeq" id="NP_718637.2">
    <property type="nucleotide sequence ID" value="NC_004347.2"/>
</dbReference>
<dbReference type="RefSeq" id="WP_011072971.1">
    <property type="nucleotide sequence ID" value="NC_004347.2"/>
</dbReference>
<dbReference type="SMR" id="Q8ECR0"/>
<dbReference type="STRING" id="211586.SO_3073"/>
<dbReference type="PaxDb" id="211586-SO_3073"/>
<dbReference type="KEGG" id="son:SO_3073"/>
<dbReference type="PATRIC" id="fig|211586.12.peg.2969"/>
<dbReference type="eggNOG" id="COG0665">
    <property type="taxonomic scope" value="Bacteria"/>
</dbReference>
<dbReference type="eggNOG" id="COG4121">
    <property type="taxonomic scope" value="Bacteria"/>
</dbReference>
<dbReference type="HOGENOM" id="CLU_022427_2_1_6"/>
<dbReference type="OrthoDB" id="9786494at2"/>
<dbReference type="PhylomeDB" id="Q8ECR0"/>
<dbReference type="BioCyc" id="SONE211586:G1GMP-2845-MONOMER"/>
<dbReference type="Proteomes" id="UP000008186">
    <property type="component" value="Chromosome"/>
</dbReference>
<dbReference type="GO" id="GO:0005737">
    <property type="term" value="C:cytoplasm"/>
    <property type="evidence" value="ECO:0000318"/>
    <property type="project" value="GO_Central"/>
</dbReference>
<dbReference type="GO" id="GO:0050660">
    <property type="term" value="F:flavin adenine dinucleotide binding"/>
    <property type="evidence" value="ECO:0007669"/>
    <property type="project" value="UniProtKB-UniRule"/>
</dbReference>
<dbReference type="GO" id="GO:0016645">
    <property type="term" value="F:oxidoreductase activity, acting on the CH-NH group of donors"/>
    <property type="evidence" value="ECO:0007669"/>
    <property type="project" value="InterPro"/>
</dbReference>
<dbReference type="GO" id="GO:0004808">
    <property type="term" value="F:tRNA (5-methylaminomethyl-2-thiouridylate)(34)-methyltransferase activity"/>
    <property type="evidence" value="ECO:0000318"/>
    <property type="project" value="GO_Central"/>
</dbReference>
<dbReference type="GO" id="GO:0032259">
    <property type="term" value="P:methylation"/>
    <property type="evidence" value="ECO:0007669"/>
    <property type="project" value="UniProtKB-KW"/>
</dbReference>
<dbReference type="GO" id="GO:0002098">
    <property type="term" value="P:tRNA wobble uridine modification"/>
    <property type="evidence" value="ECO:0000318"/>
    <property type="project" value="GO_Central"/>
</dbReference>
<dbReference type="Gene3D" id="3.30.9.10">
    <property type="entry name" value="D-Amino Acid Oxidase, subunit A, domain 2"/>
    <property type="match status" value="1"/>
</dbReference>
<dbReference type="Gene3D" id="3.50.50.60">
    <property type="entry name" value="FAD/NAD(P)-binding domain"/>
    <property type="match status" value="1"/>
</dbReference>
<dbReference type="Gene3D" id="3.40.50.150">
    <property type="entry name" value="Vaccinia Virus protein VP39"/>
    <property type="match status" value="1"/>
</dbReference>
<dbReference type="HAMAP" id="MF_01102">
    <property type="entry name" value="MnmC"/>
    <property type="match status" value="1"/>
</dbReference>
<dbReference type="InterPro" id="IPR006076">
    <property type="entry name" value="FAD-dep_OxRdtase"/>
</dbReference>
<dbReference type="InterPro" id="IPR036188">
    <property type="entry name" value="FAD/NAD-bd_sf"/>
</dbReference>
<dbReference type="InterPro" id="IPR029063">
    <property type="entry name" value="SAM-dependent_MTases_sf"/>
</dbReference>
<dbReference type="InterPro" id="IPR023032">
    <property type="entry name" value="tRNA_MAMT_biosynth_bifunc_MnmC"/>
</dbReference>
<dbReference type="InterPro" id="IPR017610">
    <property type="entry name" value="tRNA_S-uridine_synth_MnmC_C"/>
</dbReference>
<dbReference type="NCBIfam" id="TIGR03197">
    <property type="entry name" value="MnmC_Cterm"/>
    <property type="match status" value="1"/>
</dbReference>
<dbReference type="PANTHER" id="PTHR13847">
    <property type="entry name" value="SARCOSINE DEHYDROGENASE-RELATED"/>
    <property type="match status" value="1"/>
</dbReference>
<dbReference type="PANTHER" id="PTHR13847:SF283">
    <property type="entry name" value="TRNA 5-METHYLAMINOMETHYL-2-THIOURIDINE BIOSYNTHESIS BIFUNCTIONAL PROTEIN MNMC"/>
    <property type="match status" value="1"/>
</dbReference>
<dbReference type="Pfam" id="PF01266">
    <property type="entry name" value="DAO"/>
    <property type="match status" value="1"/>
</dbReference>
<dbReference type="SUPFAM" id="SSF51905">
    <property type="entry name" value="FAD/NAD(P)-binding domain"/>
    <property type="match status" value="1"/>
</dbReference>
<proteinExistence type="inferred from homology"/>
<organism>
    <name type="scientific">Shewanella oneidensis (strain ATCC 700550 / JCM 31522 / CIP 106686 / LMG 19005 / NCIMB 14063 / MR-1)</name>
    <dbReference type="NCBI Taxonomy" id="211586"/>
    <lineage>
        <taxon>Bacteria</taxon>
        <taxon>Pseudomonadati</taxon>
        <taxon>Pseudomonadota</taxon>
        <taxon>Gammaproteobacteria</taxon>
        <taxon>Alteromonadales</taxon>
        <taxon>Shewanellaceae</taxon>
        <taxon>Shewanella</taxon>
    </lineage>
</organism>
<protein>
    <recommendedName>
        <fullName evidence="1">tRNA 5-methylaminomethyl-2-thiouridine biosynthesis bifunctional protein MnmC</fullName>
        <shortName evidence="1">tRNA mnm(5)s(2)U biosynthesis bifunctional protein</shortName>
    </recommendedName>
    <domain>
        <recommendedName>
            <fullName evidence="1">tRNA (mnm(5)s(2)U34)-methyltransferase</fullName>
            <ecNumber evidence="1">2.1.1.61</ecNumber>
        </recommendedName>
    </domain>
    <domain>
        <recommendedName>
            <fullName evidence="1">FAD-dependent cmnm(5)s(2)U34 oxidoreductase</fullName>
            <ecNumber evidence="1">1.5.-.-</ecNumber>
        </recommendedName>
    </domain>
</protein>
<comment type="function">
    <text evidence="1">Catalyzes the last two steps in the biosynthesis of 5-methylaminomethyl-2-thiouridine (mnm(5)s(2)U) at the wobble position (U34) in tRNA. Catalyzes the FAD-dependent demodification of cmnm(5)s(2)U34 to nm(5)s(2)U34, followed by the transfer of a methyl group from S-adenosyl-L-methionine to nm(5)s(2)U34, to form mnm(5)s(2)U34.</text>
</comment>
<comment type="catalytic activity">
    <reaction evidence="1">
        <text>5-aminomethyl-2-thiouridine(34) in tRNA + S-adenosyl-L-methionine = 5-methylaminomethyl-2-thiouridine(34) in tRNA + S-adenosyl-L-homocysteine + H(+)</text>
        <dbReference type="Rhea" id="RHEA:19569"/>
        <dbReference type="Rhea" id="RHEA-COMP:10195"/>
        <dbReference type="Rhea" id="RHEA-COMP:10197"/>
        <dbReference type="ChEBI" id="CHEBI:15378"/>
        <dbReference type="ChEBI" id="CHEBI:57856"/>
        <dbReference type="ChEBI" id="CHEBI:59789"/>
        <dbReference type="ChEBI" id="CHEBI:74454"/>
        <dbReference type="ChEBI" id="CHEBI:74455"/>
        <dbReference type="EC" id="2.1.1.61"/>
    </reaction>
</comment>
<comment type="cofactor">
    <cofactor evidence="1">
        <name>FAD</name>
        <dbReference type="ChEBI" id="CHEBI:57692"/>
    </cofactor>
</comment>
<comment type="subcellular location">
    <subcellularLocation>
        <location evidence="1">Cytoplasm</location>
    </subcellularLocation>
</comment>
<comment type="similarity">
    <text evidence="1">In the N-terminal section; belongs to the methyltransferase superfamily. tRNA (mnm(5)s(2)U34)-methyltransferase family.</text>
</comment>
<comment type="similarity">
    <text evidence="1">In the C-terminal section; belongs to the DAO family.</text>
</comment>
<sequence>MTAKPHISCQFKRDYPQLINLYPTCTIATQHSLDNLNRLRHQCLTALLTQPSPHLCVMGQWGLGDGIELLSFIHYWQTLAKTQNLPRLLLKVFEPNPINYYELKLLWDQSQSLILHPHLQPIANAIIEAKPARIIGCQRLIFDDGRISLDLDFGDLQTMLVNQPHCGTYPIQQWLILPHLAPQLSRKILWQMARLSADDAHFIGVELAETTQNLAKTCGFSPLTITADMLCGEQIDSIASQIVTDDILLHERKLLRQQANNHQAFTPRPSQVASTKQPIAIIGGGLASAHLMLSLAEREQSSILFCKDNDLGQGASGNRQGAIYPLLTPENDELSRFFQQAFLFSRRRIAALSLASMKGSDVASGVMPISHDFCGVLQTGHDERSQQRLDKIIQSQDWPAEIAYAVDASEANKIAKIGIDKAGFYYPLGGWVCPFEYAKAAVDKASQLANVQCHFNTEITEIERDAKGWYLLSQDQRFGPFRQLVLANGAQLTQFSASERLQISPFRGQVSHIPSQFQLSQLATVLCANGYLTPSHQGLHCLGASYVKAAEHLDFCPLEQLENLGKMQQSYPNQDWVEDIDISANSARVGVRMVTRDHFPMMGCAPDVNEIWARYEQHQINQQQAEQIRHYWQTTPAPIHDGLYILGGLGSRGLSSGPLAAECLAAQLTDEPLPLDWPTLNKLSPNRMWLRKLLKGKAL</sequence>
<gene>
    <name evidence="1" type="primary">mnmC</name>
    <name type="ordered locus">SO_3073</name>
</gene>
<keyword id="KW-0963">Cytoplasm</keyword>
<keyword id="KW-0274">FAD</keyword>
<keyword id="KW-0285">Flavoprotein</keyword>
<keyword id="KW-0489">Methyltransferase</keyword>
<keyword id="KW-0511">Multifunctional enzyme</keyword>
<keyword id="KW-0560">Oxidoreductase</keyword>
<keyword id="KW-1185">Reference proteome</keyword>
<keyword id="KW-0949">S-adenosyl-L-methionine</keyword>
<keyword id="KW-0808">Transferase</keyword>
<keyword id="KW-0819">tRNA processing</keyword>
<feature type="chain" id="PRO_0000348030" description="tRNA 5-methylaminomethyl-2-thiouridine biosynthesis bifunctional protein MnmC">
    <location>
        <begin position="1"/>
        <end position="699"/>
    </location>
</feature>
<feature type="region of interest" description="tRNA (mnm(5)s(2)U34)-methyltransferase">
    <location>
        <begin position="1"/>
        <end position="260"/>
    </location>
</feature>
<feature type="region of interest" description="FAD-dependent cmnm(5)s(2)U34 oxidoreductase">
    <location>
        <begin position="282"/>
        <end position="699"/>
    </location>
</feature>